<reference key="1">
    <citation type="journal article" date="2004" name="Proc. Natl. Acad. Sci. U.S.A.">
        <title>Genomic plasticity of the causative agent of melioidosis, Burkholderia pseudomallei.</title>
        <authorList>
            <person name="Holden M.T.G."/>
            <person name="Titball R.W."/>
            <person name="Peacock S.J."/>
            <person name="Cerdeno-Tarraga A.-M."/>
            <person name="Atkins T."/>
            <person name="Crossman L.C."/>
            <person name="Pitt T."/>
            <person name="Churcher C."/>
            <person name="Mungall K.L."/>
            <person name="Bentley S.D."/>
            <person name="Sebaihia M."/>
            <person name="Thomson N.R."/>
            <person name="Bason N."/>
            <person name="Beacham I.R."/>
            <person name="Brooks K."/>
            <person name="Brown K.A."/>
            <person name="Brown N.F."/>
            <person name="Challis G.L."/>
            <person name="Cherevach I."/>
            <person name="Chillingworth T."/>
            <person name="Cronin A."/>
            <person name="Crossett B."/>
            <person name="Davis P."/>
            <person name="DeShazer D."/>
            <person name="Feltwell T."/>
            <person name="Fraser A."/>
            <person name="Hance Z."/>
            <person name="Hauser H."/>
            <person name="Holroyd S."/>
            <person name="Jagels K."/>
            <person name="Keith K.E."/>
            <person name="Maddison M."/>
            <person name="Moule S."/>
            <person name="Price C."/>
            <person name="Quail M.A."/>
            <person name="Rabbinowitsch E."/>
            <person name="Rutherford K."/>
            <person name="Sanders M."/>
            <person name="Simmonds M."/>
            <person name="Songsivilai S."/>
            <person name="Stevens K."/>
            <person name="Tumapa S."/>
            <person name="Vesaratchavest M."/>
            <person name="Whitehead S."/>
            <person name="Yeats C."/>
            <person name="Barrell B.G."/>
            <person name="Oyston P.C.F."/>
            <person name="Parkhill J."/>
        </authorList>
    </citation>
    <scope>NUCLEOTIDE SEQUENCE [LARGE SCALE GENOMIC DNA]</scope>
    <source>
        <strain>K96243</strain>
    </source>
</reference>
<keyword id="KW-0488">Methylation</keyword>
<keyword id="KW-1185">Reference proteome</keyword>
<keyword id="KW-0687">Ribonucleoprotein</keyword>
<keyword id="KW-0689">Ribosomal protein</keyword>
<keyword id="KW-0694">RNA-binding</keyword>
<keyword id="KW-0699">rRNA-binding</keyword>
<keyword id="KW-0820">tRNA-binding</keyword>
<comment type="function">
    <text evidence="2">With S4 and S5 plays an important role in translational accuracy.</text>
</comment>
<comment type="function">
    <text evidence="2">Interacts with and stabilizes bases of the 16S rRNA that are involved in tRNA selection in the A site and with the mRNA backbone. Located at the interface of the 30S and 50S subunits, it traverses the body of the 30S subunit contacting proteins on the other side and probably holding the rRNA structure together. The combined cluster of proteins S8, S12 and S17 appears to hold together the shoulder and platform of the 30S subunit.</text>
</comment>
<comment type="subunit">
    <text evidence="2">Part of the 30S ribosomal subunit. Contacts proteins S8 and S17. May interact with IF1 in the 30S initiation complex.</text>
</comment>
<comment type="similarity">
    <text evidence="2">Belongs to the universal ribosomal protein uS12 family.</text>
</comment>
<evidence type="ECO:0000250" key="1"/>
<evidence type="ECO:0000255" key="2">
    <source>
        <dbReference type="HAMAP-Rule" id="MF_00403"/>
    </source>
</evidence>
<evidence type="ECO:0000256" key="3">
    <source>
        <dbReference type="SAM" id="MobiDB-lite"/>
    </source>
</evidence>
<evidence type="ECO:0000305" key="4"/>
<organism>
    <name type="scientific">Burkholderia pseudomallei (strain K96243)</name>
    <dbReference type="NCBI Taxonomy" id="272560"/>
    <lineage>
        <taxon>Bacteria</taxon>
        <taxon>Pseudomonadati</taxon>
        <taxon>Pseudomonadota</taxon>
        <taxon>Betaproteobacteria</taxon>
        <taxon>Burkholderiales</taxon>
        <taxon>Burkholderiaceae</taxon>
        <taxon>Burkholderia</taxon>
        <taxon>pseudomallei group</taxon>
    </lineage>
</organism>
<accession>Q63Q06</accession>
<name>RS12_BURPS</name>
<dbReference type="EMBL" id="BX571965">
    <property type="protein sequence ID" value="CAH37229.1"/>
    <property type="molecule type" value="Genomic_DNA"/>
</dbReference>
<dbReference type="RefSeq" id="WP_004521903.1">
    <property type="nucleotide sequence ID" value="NZ_CP009538.1"/>
</dbReference>
<dbReference type="RefSeq" id="YP_109812.1">
    <property type="nucleotide sequence ID" value="NC_006350.1"/>
</dbReference>
<dbReference type="SMR" id="Q63Q06"/>
<dbReference type="STRING" id="272560.BPSL3218"/>
<dbReference type="GeneID" id="93061837"/>
<dbReference type="KEGG" id="bps:BPSL3218"/>
<dbReference type="PATRIC" id="fig|272560.51.peg.2020"/>
<dbReference type="eggNOG" id="COG0048">
    <property type="taxonomic scope" value="Bacteria"/>
</dbReference>
<dbReference type="Proteomes" id="UP000000605">
    <property type="component" value="Chromosome 1"/>
</dbReference>
<dbReference type="GO" id="GO:0015935">
    <property type="term" value="C:small ribosomal subunit"/>
    <property type="evidence" value="ECO:0007669"/>
    <property type="project" value="InterPro"/>
</dbReference>
<dbReference type="GO" id="GO:0019843">
    <property type="term" value="F:rRNA binding"/>
    <property type="evidence" value="ECO:0007669"/>
    <property type="project" value="UniProtKB-UniRule"/>
</dbReference>
<dbReference type="GO" id="GO:0003735">
    <property type="term" value="F:structural constituent of ribosome"/>
    <property type="evidence" value="ECO:0007669"/>
    <property type="project" value="InterPro"/>
</dbReference>
<dbReference type="GO" id="GO:0000049">
    <property type="term" value="F:tRNA binding"/>
    <property type="evidence" value="ECO:0007669"/>
    <property type="project" value="UniProtKB-UniRule"/>
</dbReference>
<dbReference type="GO" id="GO:0006412">
    <property type="term" value="P:translation"/>
    <property type="evidence" value="ECO:0007669"/>
    <property type="project" value="UniProtKB-UniRule"/>
</dbReference>
<dbReference type="CDD" id="cd03368">
    <property type="entry name" value="Ribosomal_S12"/>
    <property type="match status" value="1"/>
</dbReference>
<dbReference type="FunFam" id="2.40.50.140:FF:000001">
    <property type="entry name" value="30S ribosomal protein S12"/>
    <property type="match status" value="1"/>
</dbReference>
<dbReference type="Gene3D" id="2.40.50.140">
    <property type="entry name" value="Nucleic acid-binding proteins"/>
    <property type="match status" value="1"/>
</dbReference>
<dbReference type="HAMAP" id="MF_00403_B">
    <property type="entry name" value="Ribosomal_uS12_B"/>
    <property type="match status" value="1"/>
</dbReference>
<dbReference type="InterPro" id="IPR012340">
    <property type="entry name" value="NA-bd_OB-fold"/>
</dbReference>
<dbReference type="InterPro" id="IPR006032">
    <property type="entry name" value="Ribosomal_uS12"/>
</dbReference>
<dbReference type="InterPro" id="IPR005679">
    <property type="entry name" value="Ribosomal_uS12_bac"/>
</dbReference>
<dbReference type="NCBIfam" id="TIGR00981">
    <property type="entry name" value="rpsL_bact"/>
    <property type="match status" value="1"/>
</dbReference>
<dbReference type="PANTHER" id="PTHR11652">
    <property type="entry name" value="30S RIBOSOMAL PROTEIN S12 FAMILY MEMBER"/>
    <property type="match status" value="1"/>
</dbReference>
<dbReference type="Pfam" id="PF00164">
    <property type="entry name" value="Ribosom_S12_S23"/>
    <property type="match status" value="1"/>
</dbReference>
<dbReference type="PIRSF" id="PIRSF002133">
    <property type="entry name" value="Ribosomal_S12/S23"/>
    <property type="match status" value="1"/>
</dbReference>
<dbReference type="PRINTS" id="PR01034">
    <property type="entry name" value="RIBOSOMALS12"/>
</dbReference>
<dbReference type="SUPFAM" id="SSF50249">
    <property type="entry name" value="Nucleic acid-binding proteins"/>
    <property type="match status" value="1"/>
</dbReference>
<dbReference type="PROSITE" id="PS00055">
    <property type="entry name" value="RIBOSOMAL_S12"/>
    <property type="match status" value="1"/>
</dbReference>
<proteinExistence type="inferred from homology"/>
<gene>
    <name evidence="2" type="primary">rpsL</name>
    <name type="ordered locus">BPSL3218</name>
</gene>
<protein>
    <recommendedName>
        <fullName evidence="2">Small ribosomal subunit protein uS12</fullName>
    </recommendedName>
    <alternativeName>
        <fullName evidence="4">30S ribosomal protein S12</fullName>
    </alternativeName>
</protein>
<feature type="chain" id="PRO_0000146196" description="Small ribosomal subunit protein uS12">
    <location>
        <begin position="1"/>
        <end position="126"/>
    </location>
</feature>
<feature type="region of interest" description="Disordered" evidence="3">
    <location>
        <begin position="1"/>
        <end position="26"/>
    </location>
</feature>
<feature type="region of interest" description="Disordered" evidence="3">
    <location>
        <begin position="101"/>
        <end position="126"/>
    </location>
</feature>
<feature type="compositionally biased region" description="Basic residues" evidence="3">
    <location>
        <begin position="113"/>
        <end position="126"/>
    </location>
</feature>
<feature type="modified residue" description="3-methylthioaspartic acid" evidence="1">
    <location>
        <position position="89"/>
    </location>
</feature>
<sequence>MPTINQLVRKGRASETTKSKSPALQDCPQRRGVCTRVYTTTPKKPNSALRKVAKVRLTNGFEVISYIGGEGHNLQEHSVVLIRGGRVKDLPGVRYHMVRGSLDTQGVKDRKQARSKYGAKRAKAAK</sequence>